<keyword id="KW-0472">Membrane</keyword>
<keyword id="KW-1185">Reference proteome</keyword>
<keyword id="KW-0812">Transmembrane</keyword>
<keyword id="KW-1133">Transmembrane helix</keyword>
<gene>
    <name evidence="3" type="primary">SMIM46</name>
</gene>
<name>SIM46_HUMAN</name>
<organism>
    <name type="scientific">Homo sapiens</name>
    <name type="common">Human</name>
    <dbReference type="NCBI Taxonomy" id="9606"/>
    <lineage>
        <taxon>Eukaryota</taxon>
        <taxon>Metazoa</taxon>
        <taxon>Chordata</taxon>
        <taxon>Craniata</taxon>
        <taxon>Vertebrata</taxon>
        <taxon>Euteleostomi</taxon>
        <taxon>Mammalia</taxon>
        <taxon>Eutheria</taxon>
        <taxon>Euarchontoglires</taxon>
        <taxon>Primates</taxon>
        <taxon>Haplorrhini</taxon>
        <taxon>Catarrhini</taxon>
        <taxon>Hominidae</taxon>
        <taxon>Homo</taxon>
    </lineage>
</organism>
<sequence>MDLGSGSSQGGDLETTFQLWLQLLLWAHLAVRFLGYLHRTFRGPKPQPAP</sequence>
<comment type="subcellular location">
    <subcellularLocation>
        <location evidence="1">Membrane</location>
        <topology evidence="1">Single-pass membrane protein</topology>
    </subcellularLocation>
</comment>
<accession>P0DQW1</accession>
<protein>
    <recommendedName>
        <fullName evidence="2">Small integral membrane protein 46</fullName>
    </recommendedName>
</protein>
<feature type="chain" id="PRO_0000457097" description="Small integral membrane protein 46">
    <location>
        <begin position="1"/>
        <end position="50"/>
    </location>
</feature>
<feature type="transmembrane region" description="Helical" evidence="1">
    <location>
        <begin position="15"/>
        <end position="37"/>
    </location>
</feature>
<evidence type="ECO:0000255" key="1"/>
<evidence type="ECO:0000305" key="2"/>
<evidence type="ECO:0000312" key="3">
    <source>
        <dbReference type="HGNC" id="HGNC:56307"/>
    </source>
</evidence>
<proteinExistence type="inferred from homology"/>
<reference key="1">
    <citation type="journal article" date="2004" name="Nature">
        <title>The DNA sequence and biology of human chromosome 19.</title>
        <authorList>
            <person name="Grimwood J."/>
            <person name="Gordon L.A."/>
            <person name="Olsen A.S."/>
            <person name="Terry A."/>
            <person name="Schmutz J."/>
            <person name="Lamerdin J.E."/>
            <person name="Hellsten U."/>
            <person name="Goodstein D."/>
            <person name="Couronne O."/>
            <person name="Tran-Gyamfi M."/>
            <person name="Aerts A."/>
            <person name="Altherr M."/>
            <person name="Ashworth L."/>
            <person name="Bajorek E."/>
            <person name="Black S."/>
            <person name="Branscomb E."/>
            <person name="Caenepeel S."/>
            <person name="Carrano A.V."/>
            <person name="Caoile C."/>
            <person name="Chan Y.M."/>
            <person name="Christensen M."/>
            <person name="Cleland C.A."/>
            <person name="Copeland A."/>
            <person name="Dalin E."/>
            <person name="Dehal P."/>
            <person name="Denys M."/>
            <person name="Detter J.C."/>
            <person name="Escobar J."/>
            <person name="Flowers D."/>
            <person name="Fotopulos D."/>
            <person name="Garcia C."/>
            <person name="Georgescu A.M."/>
            <person name="Glavina T."/>
            <person name="Gomez M."/>
            <person name="Gonzales E."/>
            <person name="Groza M."/>
            <person name="Hammon N."/>
            <person name="Hawkins T."/>
            <person name="Haydu L."/>
            <person name="Ho I."/>
            <person name="Huang W."/>
            <person name="Israni S."/>
            <person name="Jett J."/>
            <person name="Kadner K."/>
            <person name="Kimball H."/>
            <person name="Kobayashi A."/>
            <person name="Larionov V."/>
            <person name="Leem S.-H."/>
            <person name="Lopez F."/>
            <person name="Lou Y."/>
            <person name="Lowry S."/>
            <person name="Malfatti S."/>
            <person name="Martinez D."/>
            <person name="McCready P.M."/>
            <person name="Medina C."/>
            <person name="Morgan J."/>
            <person name="Nelson K."/>
            <person name="Nolan M."/>
            <person name="Ovcharenko I."/>
            <person name="Pitluck S."/>
            <person name="Pollard M."/>
            <person name="Popkie A.P."/>
            <person name="Predki P."/>
            <person name="Quan G."/>
            <person name="Ramirez L."/>
            <person name="Rash S."/>
            <person name="Retterer J."/>
            <person name="Rodriguez A."/>
            <person name="Rogers S."/>
            <person name="Salamov A."/>
            <person name="Salazar A."/>
            <person name="She X."/>
            <person name="Smith D."/>
            <person name="Slezak T."/>
            <person name="Solovyev V."/>
            <person name="Thayer N."/>
            <person name="Tice H."/>
            <person name="Tsai M."/>
            <person name="Ustaszewska A."/>
            <person name="Vo N."/>
            <person name="Wagner M."/>
            <person name="Wheeler J."/>
            <person name="Wu K."/>
            <person name="Xie G."/>
            <person name="Yang J."/>
            <person name="Dubchak I."/>
            <person name="Furey T.S."/>
            <person name="DeJong P."/>
            <person name="Dickson M."/>
            <person name="Gordon D."/>
            <person name="Eichler E.E."/>
            <person name="Pennacchio L.A."/>
            <person name="Richardson P."/>
            <person name="Stubbs L."/>
            <person name="Rokhsar D.S."/>
            <person name="Myers R.M."/>
            <person name="Rubin E.M."/>
            <person name="Lucas S.M."/>
        </authorList>
    </citation>
    <scope>NUCLEOTIDE SEQUENCE [LARGE SCALE GENOMIC DNA]</scope>
</reference>
<dbReference type="EMBL" id="AC022098">
    <property type="status" value="NOT_ANNOTATED_CDS"/>
    <property type="molecule type" value="Genomic_DNA"/>
</dbReference>
<dbReference type="RefSeq" id="NP_001401340.1">
    <property type="nucleotide sequence ID" value="NM_001414411.1"/>
</dbReference>
<dbReference type="SMR" id="P0DQW1"/>
<dbReference type="Ensembl" id="ENST00000699221.1">
    <property type="protein sequence ID" value="ENSP00000514215.1"/>
    <property type="gene ID" value="ENSG00000289762.1"/>
</dbReference>
<dbReference type="GeneID" id="127138866"/>
<dbReference type="MANE-Select" id="ENST00000699221.1">
    <property type="protein sequence ID" value="ENSP00000514215.1"/>
    <property type="RefSeq nucleotide sequence ID" value="NM_001414411.1"/>
    <property type="RefSeq protein sequence ID" value="NP_001401340.1"/>
</dbReference>
<dbReference type="AGR" id="HGNC:56307"/>
<dbReference type="GeneCards" id="SMIM46"/>
<dbReference type="HGNC" id="HGNC:56307">
    <property type="gene designation" value="SMIM46"/>
</dbReference>
<dbReference type="GeneTree" id="ENSGT01090000263451"/>
<dbReference type="PRO" id="PR:P0DQW1"/>
<dbReference type="Proteomes" id="UP000005640">
    <property type="component" value="Chromosome 19"/>
</dbReference>
<dbReference type="GO" id="GO:0016020">
    <property type="term" value="C:membrane"/>
    <property type="evidence" value="ECO:0007669"/>
    <property type="project" value="UniProtKB-SubCell"/>
</dbReference>